<keyword id="KW-0028">Amino-acid biosynthesis</keyword>
<keyword id="KW-0032">Aminotransferase</keyword>
<keyword id="KW-0963">Cytoplasm</keyword>
<keyword id="KW-0663">Pyridoxal phosphate</keyword>
<keyword id="KW-0664">Pyridoxine biosynthesis</keyword>
<keyword id="KW-1185">Reference proteome</keyword>
<keyword id="KW-0718">Serine biosynthesis</keyword>
<keyword id="KW-0808">Transferase</keyword>
<gene>
    <name evidence="1" type="primary">serC</name>
    <name type="ordered locus">PSPTO_1746</name>
</gene>
<sequence length="361" mass="39652">MSKRAFNFCAGPAALPEAVLLRAQAELLDWHGKGLSVMEMSHRSDEFVSIANKAEQDLRDLLSIPSNYKVLFLQGGASQQFAQIALNLLPENGKADYIDTGIWSQKAIDEASRYGTINVAASAKAYDYFAIPGQNEWTLSRDAAYVHYAPNETIGGLEFNWIPETGDVPLVADMSSDILSRPVDISRFGMIYAGAQKNIGPSGVVVVIIREDLLGRARTLCPTMLDYKVAADNGSMYNTPPTLAWYLSGLVFEWLKEQGGVEAIGKLNDIKQRTLYDFIDASGLYSNPINTPDRSWMNVPFRLADDRLDKPFLAGADANGLLNLKGHRSVGGMRASIYNAVDINAVNALVAYMKDFEKEHG</sequence>
<dbReference type="EC" id="2.6.1.52" evidence="1"/>
<dbReference type="EMBL" id="AE016853">
    <property type="protein sequence ID" value="AAO55266.1"/>
    <property type="molecule type" value="Genomic_DNA"/>
</dbReference>
<dbReference type="RefSeq" id="NP_791571.1">
    <property type="nucleotide sequence ID" value="NC_004578.1"/>
</dbReference>
<dbReference type="RefSeq" id="WP_005766746.1">
    <property type="nucleotide sequence ID" value="NC_004578.1"/>
</dbReference>
<dbReference type="SMR" id="Q885T5"/>
<dbReference type="STRING" id="223283.PSPTO_1746"/>
<dbReference type="GeneID" id="1183383"/>
<dbReference type="KEGG" id="pst:PSPTO_1746"/>
<dbReference type="PATRIC" id="fig|223283.9.peg.1775"/>
<dbReference type="eggNOG" id="COG1932">
    <property type="taxonomic scope" value="Bacteria"/>
</dbReference>
<dbReference type="HOGENOM" id="CLU_034866_0_2_6"/>
<dbReference type="OrthoDB" id="9809412at2"/>
<dbReference type="PhylomeDB" id="Q885T5"/>
<dbReference type="UniPathway" id="UPA00135">
    <property type="reaction ID" value="UER00197"/>
</dbReference>
<dbReference type="UniPathway" id="UPA00244">
    <property type="reaction ID" value="UER00311"/>
</dbReference>
<dbReference type="Proteomes" id="UP000002515">
    <property type="component" value="Chromosome"/>
</dbReference>
<dbReference type="GO" id="GO:0005737">
    <property type="term" value="C:cytoplasm"/>
    <property type="evidence" value="ECO:0007669"/>
    <property type="project" value="UniProtKB-SubCell"/>
</dbReference>
<dbReference type="GO" id="GO:0004648">
    <property type="term" value="F:O-phospho-L-serine:2-oxoglutarate aminotransferase activity"/>
    <property type="evidence" value="ECO:0007669"/>
    <property type="project" value="UniProtKB-UniRule"/>
</dbReference>
<dbReference type="GO" id="GO:0030170">
    <property type="term" value="F:pyridoxal phosphate binding"/>
    <property type="evidence" value="ECO:0007669"/>
    <property type="project" value="UniProtKB-UniRule"/>
</dbReference>
<dbReference type="GO" id="GO:0006564">
    <property type="term" value="P:L-serine biosynthetic process"/>
    <property type="evidence" value="ECO:0007669"/>
    <property type="project" value="UniProtKB-UniRule"/>
</dbReference>
<dbReference type="GO" id="GO:0008615">
    <property type="term" value="P:pyridoxine biosynthetic process"/>
    <property type="evidence" value="ECO:0007669"/>
    <property type="project" value="UniProtKB-UniRule"/>
</dbReference>
<dbReference type="CDD" id="cd00611">
    <property type="entry name" value="PSAT_like"/>
    <property type="match status" value="1"/>
</dbReference>
<dbReference type="FunFam" id="3.40.640.10:FF:000010">
    <property type="entry name" value="Phosphoserine aminotransferase"/>
    <property type="match status" value="1"/>
</dbReference>
<dbReference type="FunFam" id="3.90.1150.10:FF:000006">
    <property type="entry name" value="Phosphoserine aminotransferase"/>
    <property type="match status" value="1"/>
</dbReference>
<dbReference type="Gene3D" id="3.90.1150.10">
    <property type="entry name" value="Aspartate Aminotransferase, domain 1"/>
    <property type="match status" value="1"/>
</dbReference>
<dbReference type="Gene3D" id="3.40.640.10">
    <property type="entry name" value="Type I PLP-dependent aspartate aminotransferase-like (Major domain)"/>
    <property type="match status" value="1"/>
</dbReference>
<dbReference type="HAMAP" id="MF_00160">
    <property type="entry name" value="SerC_aminotrans_5"/>
    <property type="match status" value="1"/>
</dbReference>
<dbReference type="InterPro" id="IPR000192">
    <property type="entry name" value="Aminotrans_V_dom"/>
</dbReference>
<dbReference type="InterPro" id="IPR022278">
    <property type="entry name" value="Pser_aminoTfrase"/>
</dbReference>
<dbReference type="InterPro" id="IPR015424">
    <property type="entry name" value="PyrdxlP-dep_Trfase"/>
</dbReference>
<dbReference type="InterPro" id="IPR015421">
    <property type="entry name" value="PyrdxlP-dep_Trfase_major"/>
</dbReference>
<dbReference type="InterPro" id="IPR015422">
    <property type="entry name" value="PyrdxlP-dep_Trfase_small"/>
</dbReference>
<dbReference type="NCBIfam" id="NF003764">
    <property type="entry name" value="PRK05355.1"/>
    <property type="match status" value="1"/>
</dbReference>
<dbReference type="NCBIfam" id="TIGR01364">
    <property type="entry name" value="serC_1"/>
    <property type="match status" value="1"/>
</dbReference>
<dbReference type="PANTHER" id="PTHR43247">
    <property type="entry name" value="PHOSPHOSERINE AMINOTRANSFERASE"/>
    <property type="match status" value="1"/>
</dbReference>
<dbReference type="PANTHER" id="PTHR43247:SF1">
    <property type="entry name" value="PHOSPHOSERINE AMINOTRANSFERASE"/>
    <property type="match status" value="1"/>
</dbReference>
<dbReference type="Pfam" id="PF00266">
    <property type="entry name" value="Aminotran_5"/>
    <property type="match status" value="1"/>
</dbReference>
<dbReference type="PIRSF" id="PIRSF000525">
    <property type="entry name" value="SerC"/>
    <property type="match status" value="1"/>
</dbReference>
<dbReference type="SUPFAM" id="SSF53383">
    <property type="entry name" value="PLP-dependent transferases"/>
    <property type="match status" value="1"/>
</dbReference>
<evidence type="ECO:0000255" key="1">
    <source>
        <dbReference type="HAMAP-Rule" id="MF_00160"/>
    </source>
</evidence>
<organism>
    <name type="scientific">Pseudomonas syringae pv. tomato (strain ATCC BAA-871 / DC3000)</name>
    <dbReference type="NCBI Taxonomy" id="223283"/>
    <lineage>
        <taxon>Bacteria</taxon>
        <taxon>Pseudomonadati</taxon>
        <taxon>Pseudomonadota</taxon>
        <taxon>Gammaproteobacteria</taxon>
        <taxon>Pseudomonadales</taxon>
        <taxon>Pseudomonadaceae</taxon>
        <taxon>Pseudomonas</taxon>
    </lineage>
</organism>
<name>SERC_PSESM</name>
<proteinExistence type="inferred from homology"/>
<accession>Q885T5</accession>
<protein>
    <recommendedName>
        <fullName evidence="1">Phosphoserine aminotransferase</fullName>
        <ecNumber evidence="1">2.6.1.52</ecNumber>
    </recommendedName>
    <alternativeName>
        <fullName evidence="1">Phosphohydroxythreonine aminotransferase</fullName>
        <shortName evidence="1">PSAT</shortName>
    </alternativeName>
</protein>
<comment type="function">
    <text evidence="1">Catalyzes the reversible conversion of 3-phosphohydroxypyruvate to phosphoserine and of 3-hydroxy-2-oxo-4-phosphonooxybutanoate to phosphohydroxythreonine.</text>
</comment>
<comment type="catalytic activity">
    <reaction evidence="1">
        <text>O-phospho-L-serine + 2-oxoglutarate = 3-phosphooxypyruvate + L-glutamate</text>
        <dbReference type="Rhea" id="RHEA:14329"/>
        <dbReference type="ChEBI" id="CHEBI:16810"/>
        <dbReference type="ChEBI" id="CHEBI:18110"/>
        <dbReference type="ChEBI" id="CHEBI:29985"/>
        <dbReference type="ChEBI" id="CHEBI:57524"/>
        <dbReference type="EC" id="2.6.1.52"/>
    </reaction>
</comment>
<comment type="catalytic activity">
    <reaction evidence="1">
        <text>4-(phosphooxy)-L-threonine + 2-oxoglutarate = (R)-3-hydroxy-2-oxo-4-phosphooxybutanoate + L-glutamate</text>
        <dbReference type="Rhea" id="RHEA:16573"/>
        <dbReference type="ChEBI" id="CHEBI:16810"/>
        <dbReference type="ChEBI" id="CHEBI:29985"/>
        <dbReference type="ChEBI" id="CHEBI:58452"/>
        <dbReference type="ChEBI" id="CHEBI:58538"/>
        <dbReference type="EC" id="2.6.1.52"/>
    </reaction>
</comment>
<comment type="cofactor">
    <cofactor evidence="1">
        <name>pyridoxal 5'-phosphate</name>
        <dbReference type="ChEBI" id="CHEBI:597326"/>
    </cofactor>
    <text evidence="1">Binds 1 pyridoxal phosphate per subunit.</text>
</comment>
<comment type="pathway">
    <text evidence="1">Amino-acid biosynthesis; L-serine biosynthesis; L-serine from 3-phospho-D-glycerate: step 2/3.</text>
</comment>
<comment type="pathway">
    <text evidence="1">Cofactor biosynthesis; pyridoxine 5'-phosphate biosynthesis; pyridoxine 5'-phosphate from D-erythrose 4-phosphate: step 3/5.</text>
</comment>
<comment type="subunit">
    <text evidence="1">Homodimer.</text>
</comment>
<comment type="subcellular location">
    <subcellularLocation>
        <location evidence="1">Cytoplasm</location>
    </subcellularLocation>
</comment>
<comment type="similarity">
    <text evidence="1">Belongs to the class-V pyridoxal-phosphate-dependent aminotransferase family. SerC subfamily.</text>
</comment>
<reference key="1">
    <citation type="journal article" date="2003" name="Proc. Natl. Acad. Sci. U.S.A.">
        <title>The complete genome sequence of the Arabidopsis and tomato pathogen Pseudomonas syringae pv. tomato DC3000.</title>
        <authorList>
            <person name="Buell C.R."/>
            <person name="Joardar V."/>
            <person name="Lindeberg M."/>
            <person name="Selengut J."/>
            <person name="Paulsen I.T."/>
            <person name="Gwinn M.L."/>
            <person name="Dodson R.J."/>
            <person name="DeBoy R.T."/>
            <person name="Durkin A.S."/>
            <person name="Kolonay J.F."/>
            <person name="Madupu R."/>
            <person name="Daugherty S.C."/>
            <person name="Brinkac L.M."/>
            <person name="Beanan M.J."/>
            <person name="Haft D.H."/>
            <person name="Nelson W.C."/>
            <person name="Davidsen T.M."/>
            <person name="Zafar N."/>
            <person name="Zhou L."/>
            <person name="Liu J."/>
            <person name="Yuan Q."/>
            <person name="Khouri H.M."/>
            <person name="Fedorova N.B."/>
            <person name="Tran B."/>
            <person name="Russell D."/>
            <person name="Berry K.J."/>
            <person name="Utterback T.R."/>
            <person name="Van Aken S.E."/>
            <person name="Feldblyum T.V."/>
            <person name="D'Ascenzo M."/>
            <person name="Deng W.-L."/>
            <person name="Ramos A.R."/>
            <person name="Alfano J.R."/>
            <person name="Cartinhour S."/>
            <person name="Chatterjee A.K."/>
            <person name="Delaney T.P."/>
            <person name="Lazarowitz S.G."/>
            <person name="Martin G.B."/>
            <person name="Schneider D.J."/>
            <person name="Tang X."/>
            <person name="Bender C.L."/>
            <person name="White O."/>
            <person name="Fraser C.M."/>
            <person name="Collmer A."/>
        </authorList>
    </citation>
    <scope>NUCLEOTIDE SEQUENCE [LARGE SCALE GENOMIC DNA]</scope>
    <source>
        <strain>ATCC BAA-871 / DC3000</strain>
    </source>
</reference>
<feature type="chain" id="PRO_0000150200" description="Phosphoserine aminotransferase">
    <location>
        <begin position="1"/>
        <end position="361"/>
    </location>
</feature>
<feature type="binding site" evidence="1">
    <location>
        <position position="43"/>
    </location>
    <ligand>
        <name>L-glutamate</name>
        <dbReference type="ChEBI" id="CHEBI:29985"/>
    </ligand>
</feature>
<feature type="binding site" evidence="1">
    <location>
        <begin position="77"/>
        <end position="78"/>
    </location>
    <ligand>
        <name>pyridoxal 5'-phosphate</name>
        <dbReference type="ChEBI" id="CHEBI:597326"/>
    </ligand>
</feature>
<feature type="binding site" evidence="1">
    <location>
        <position position="103"/>
    </location>
    <ligand>
        <name>pyridoxal 5'-phosphate</name>
        <dbReference type="ChEBI" id="CHEBI:597326"/>
    </ligand>
</feature>
<feature type="binding site" evidence="1">
    <location>
        <position position="153"/>
    </location>
    <ligand>
        <name>pyridoxal 5'-phosphate</name>
        <dbReference type="ChEBI" id="CHEBI:597326"/>
    </ligand>
</feature>
<feature type="binding site" evidence="1">
    <location>
        <position position="173"/>
    </location>
    <ligand>
        <name>pyridoxal 5'-phosphate</name>
        <dbReference type="ChEBI" id="CHEBI:597326"/>
    </ligand>
</feature>
<feature type="binding site" evidence="1">
    <location>
        <position position="196"/>
    </location>
    <ligand>
        <name>pyridoxal 5'-phosphate</name>
        <dbReference type="ChEBI" id="CHEBI:597326"/>
    </ligand>
</feature>
<feature type="binding site" evidence="1">
    <location>
        <begin position="238"/>
        <end position="239"/>
    </location>
    <ligand>
        <name>pyridoxal 5'-phosphate</name>
        <dbReference type="ChEBI" id="CHEBI:597326"/>
    </ligand>
</feature>
<feature type="modified residue" description="N6-(pyridoxal phosphate)lysine" evidence="1">
    <location>
        <position position="197"/>
    </location>
</feature>